<name>NARK2_THETH</name>
<dbReference type="EMBL" id="Y10124">
    <property type="protein sequence ID" value="CAB65480.2"/>
    <property type="molecule type" value="Genomic_DNA"/>
</dbReference>
<dbReference type="RefSeq" id="WP_124105651.1">
    <property type="nucleotide sequence ID" value="NZ_AP025610.1"/>
</dbReference>
<dbReference type="SMR" id="Q9RA45"/>
<dbReference type="TCDB" id="2.A.1.8.9">
    <property type="family name" value="the major facilitator superfamily (mfs)"/>
</dbReference>
<dbReference type="GO" id="GO:0005886">
    <property type="term" value="C:plasma membrane"/>
    <property type="evidence" value="ECO:0007669"/>
    <property type="project" value="UniProtKB-SubCell"/>
</dbReference>
<dbReference type="GO" id="GO:0015297">
    <property type="term" value="F:antiporter activity"/>
    <property type="evidence" value="ECO:0007669"/>
    <property type="project" value="UniProtKB-KW"/>
</dbReference>
<dbReference type="GO" id="GO:0015112">
    <property type="term" value="F:nitrate transmembrane transporter activity"/>
    <property type="evidence" value="ECO:0007669"/>
    <property type="project" value="InterPro"/>
</dbReference>
<dbReference type="GO" id="GO:0015113">
    <property type="term" value="F:nitrite transmembrane transporter activity"/>
    <property type="evidence" value="ECO:0007669"/>
    <property type="project" value="InterPro"/>
</dbReference>
<dbReference type="GO" id="GO:0042128">
    <property type="term" value="P:nitrate assimilation"/>
    <property type="evidence" value="ECO:0007669"/>
    <property type="project" value="UniProtKB-KW"/>
</dbReference>
<dbReference type="CDD" id="cd17341">
    <property type="entry name" value="MFS_NRT2_like"/>
    <property type="match status" value="1"/>
</dbReference>
<dbReference type="Gene3D" id="1.20.1250.20">
    <property type="entry name" value="MFS general substrate transporter like domains"/>
    <property type="match status" value="1"/>
</dbReference>
<dbReference type="InterPro" id="IPR011701">
    <property type="entry name" value="MFS"/>
</dbReference>
<dbReference type="InterPro" id="IPR036259">
    <property type="entry name" value="MFS_trans_sf"/>
</dbReference>
<dbReference type="InterPro" id="IPR044772">
    <property type="entry name" value="NO3_transporter"/>
</dbReference>
<dbReference type="InterPro" id="IPR004737">
    <property type="entry name" value="NO3_transporter_NarK/NarU-like"/>
</dbReference>
<dbReference type="NCBIfam" id="TIGR00886">
    <property type="entry name" value="2A0108"/>
    <property type="match status" value="1"/>
</dbReference>
<dbReference type="PANTHER" id="PTHR23515">
    <property type="entry name" value="HIGH-AFFINITY NITRATE TRANSPORTER 2.3"/>
    <property type="match status" value="1"/>
</dbReference>
<dbReference type="Pfam" id="PF07690">
    <property type="entry name" value="MFS_1"/>
    <property type="match status" value="1"/>
</dbReference>
<dbReference type="SUPFAM" id="SSF103473">
    <property type="entry name" value="MFS general substrate transporter"/>
    <property type="match status" value="1"/>
</dbReference>
<protein>
    <recommendedName>
        <fullName evidence="4">Probable nitrate/nitrite antiporter NarK2</fullName>
    </recommendedName>
</protein>
<comment type="function">
    <text evidence="2">Probable nitrate/nitrite antiporter that may be involved in nitrate import and nitrite export during anaerobic growth.</text>
</comment>
<comment type="catalytic activity">
    <reaction evidence="5">
        <text>nitrate(in) + nitrite(out) = nitrate(out) + nitrite(in)</text>
        <dbReference type="Rhea" id="RHEA:28743"/>
        <dbReference type="ChEBI" id="CHEBI:16301"/>
        <dbReference type="ChEBI" id="CHEBI:17632"/>
    </reaction>
    <physiologicalReaction direction="right-to-left" evidence="5">
        <dbReference type="Rhea" id="RHEA:28745"/>
    </physiologicalReaction>
</comment>
<comment type="subcellular location">
    <subcellularLocation>
        <location evidence="4">Cell membrane</location>
        <topology evidence="1">Multi-pass membrane protein</topology>
    </subcellularLocation>
</comment>
<comment type="disruption phenotype">
    <text evidence="2">Mutation has minor effects on the ability to grow anaerobically. In contrast, narK1/narK2 double mutant is unable to grow anaerobically.</text>
</comment>
<comment type="similarity">
    <text evidence="4">Belongs to the major facilitator superfamily. Nitrate/nitrite porter (TC 2.A.1.8) family.</text>
</comment>
<gene>
    <name evidence="3" type="primary">narK2</name>
    <name evidence="6" type="synonym">narT</name>
</gene>
<feature type="chain" id="PRO_0000439860" description="Probable nitrate/nitrite antiporter NarK2">
    <location>
        <begin position="1"/>
        <end position="443"/>
    </location>
</feature>
<feature type="transmembrane region" description="Helical" evidence="1">
    <location>
        <begin position="32"/>
        <end position="52"/>
    </location>
</feature>
<feature type="transmembrane region" description="Helical" evidence="1">
    <location>
        <begin position="66"/>
        <end position="86"/>
    </location>
</feature>
<feature type="transmembrane region" description="Helical" evidence="1">
    <location>
        <begin position="95"/>
        <end position="115"/>
    </location>
</feature>
<feature type="transmembrane region" description="Helical" evidence="1">
    <location>
        <begin position="123"/>
        <end position="143"/>
    </location>
</feature>
<feature type="transmembrane region" description="Helical" evidence="1">
    <location>
        <begin position="172"/>
        <end position="192"/>
    </location>
</feature>
<feature type="transmembrane region" description="Helical" evidence="1">
    <location>
        <begin position="210"/>
        <end position="230"/>
    </location>
</feature>
<feature type="transmembrane region" description="Helical" evidence="1">
    <location>
        <begin position="256"/>
        <end position="276"/>
    </location>
</feature>
<feature type="transmembrane region" description="Helical" evidence="1">
    <location>
        <begin position="292"/>
        <end position="312"/>
    </location>
</feature>
<feature type="transmembrane region" description="Helical" evidence="1">
    <location>
        <begin position="314"/>
        <end position="334"/>
    </location>
</feature>
<feature type="transmembrane region" description="Helical" evidence="1">
    <location>
        <begin position="346"/>
        <end position="366"/>
    </location>
</feature>
<feature type="transmembrane region" description="Helical" evidence="1">
    <location>
        <begin position="383"/>
        <end position="403"/>
    </location>
</feature>
<feature type="transmembrane region" description="Helical" evidence="1">
    <location>
        <begin position="409"/>
        <end position="429"/>
    </location>
</feature>
<accession>Q9RA45</accession>
<proteinExistence type="inferred from homology"/>
<keyword id="KW-0050">Antiport</keyword>
<keyword id="KW-1003">Cell membrane</keyword>
<keyword id="KW-0472">Membrane</keyword>
<keyword id="KW-0534">Nitrate assimilation</keyword>
<keyword id="KW-0812">Transmembrane</keyword>
<keyword id="KW-1133">Transmembrane helix</keyword>
<keyword id="KW-0813">Transport</keyword>
<evidence type="ECO:0000255" key="1"/>
<evidence type="ECO:0000269" key="2">
    <source>
    </source>
</evidence>
<evidence type="ECO:0000303" key="3">
    <source>
    </source>
</evidence>
<evidence type="ECO:0000305" key="4"/>
<evidence type="ECO:0000305" key="5">
    <source>
    </source>
</evidence>
<evidence type="ECO:0000312" key="6">
    <source>
        <dbReference type="EMBL" id="CAB65480.2"/>
    </source>
</evidence>
<reference key="1">
    <citation type="journal article" date="1998" name="Biochim. Biophys. Acta">
        <title>A thermophilic nitrate reductase is responsible for the strain specific anaerobic growth of Thermus thermophilus HB8.</title>
        <authorList>
            <person name="Ramirez-Arcos S."/>
            <person name="Fernandez-Herrero L.A."/>
            <person name="Berenguer J."/>
        </authorList>
    </citation>
    <scope>NUCLEOTIDE SEQUENCE [GENOMIC DNA]</scope>
    <source>
        <strain>NAR1</strain>
    </source>
</reference>
<reference key="2">
    <citation type="journal article" date="2000" name="J. Bacteriol.">
        <title>Two nitrate/nitrite transporters are encoded within the mobilizable plasmid for nitrate respiration of Thermus thermophilus HB8.</title>
        <authorList>
            <person name="Ramirez-Arcos S."/>
            <person name="Moreno R."/>
            <person name="Zafra O."/>
            <person name="Castan P."/>
            <person name="Valles C."/>
            <person name="Berenguer J."/>
        </authorList>
    </citation>
    <scope>FUNCTION</scope>
    <scope>DISRUPTION PHENOTYPE</scope>
    <source>
        <strain>NAR1</strain>
    </source>
</reference>
<organism>
    <name type="scientific">Thermus thermophilus</name>
    <dbReference type="NCBI Taxonomy" id="274"/>
    <lineage>
        <taxon>Bacteria</taxon>
        <taxon>Thermotogati</taxon>
        <taxon>Deinococcota</taxon>
        <taxon>Deinococci</taxon>
        <taxon>Thermales</taxon>
        <taxon>Thermaceae</taxon>
        <taxon>Thermus</taxon>
    </lineage>
</organism>
<sequence>MLKSAKGTWITDWNPEDPKRWDPALAWRTLWITTFNLTLSFITWYVVSALVVRLPKVGFELSTTQLFWLTAMPGLAGGTLRIIWTFLPPILGTRHLVTFSTLLLLIPLLGWGFAVQNTGTPYWVLLLLAFLAGIGGGHFSGYMPSTSYFFPKRLQGTALGLQAGIGNFGVSIVQFVTPWIIGFALFGSLLGGPQTFTPKPGVSQPIWLQNATFAWVPFVLLGALLAWVYLRSVPIRANFREQFDIFRDKHTWIMTSLYIMTFGSFSGFSAIFPLLIREVYGKFEGAPDPLRYAFLGPLVGSLARVIAGPISDRLGGAIVTQVSAIGIFLSALLVTLYTRPTSLDQFPMFVVAMLLIFFFSGVGNASTFKQMPMIFPPRQAGGVIGWTAAVAAYGPFLFSTLAAYTQQATGGFTAFFYGLMVFYAFNFFLNWYYYARKGAEKPC</sequence>